<sequence length="757" mass="86512">MDVNPTLLFLKVPAQNAISTTFPYTGDPPYSHGTGTGYTMDTVNRTHQYSEKGKWTTNTEIGAPQLNPIDGPLPEDNEPSGYAQTDCVLEAMASLEESHPGIFENSCLETMEVVQQTRVDKLTQGRQTYDWTLNRNQPAATALANTIEVFRSNDLTSNESGRLMDFLKDVMESMNKEEMEITTHFQRKRRVRDNMTKKMVTQRTIGKKKQRLNRKSYLIRALTLNTMTKDAERGKLKRRAIATPGMQIRGFVYFVETLARRICEKLEQSGLPVGGNEKKAKLANVVRKMMTNSQDTELSFTITGDNTKWNENQNPRMFLAMITYITRNQPEWFRNVLSLAPIMFSNKMARLGKGYMFESKSMKLRTQIPAEMLASIDLKYFNDSTKKKIEKIRPLLIDGTASLSPGMMMGMFNMLSTVLGVSILNLGQRKYTKTTYWWDGLQSSDDFALIVNAPNHEGIQAGVDRFYRTCKLVGINMSKKKSYINRTGTFEFTSFFYRYGFVANFSMELPSFGVSGINESADMSIGVTVIKNNMINNDLGPATAQMALQLFIKDYRYTYRCHRGDTQIQTRRSFELKKLWEQTRSKTGLLVSDGGPNLYNIRNLHIPEVCLKWRLMDEDYKGRLCNPLNPFVSHKEIESVNSAVVMPAHGPAKSMEYDAVATTHSWIPKRNRSILNTSQRGVLEDEQMYQKCCNLFEKFFPSSSYRRPVGISSMVEAMVSRARIDARIDFESGRIKKEEFAEIMKICSTIEELRRQK</sequence>
<accession>P16504</accession>
<comment type="function">
    <text evidence="1">RNA-dependent RNA polymerase which is responsible for replication and transcription of virus RNA segments. The transcription of viral mRNAs occurs by a unique mechanism called cap-snatching. 5' methylated caps of cellular mRNAs are cleaved after 10-13 nucleotides by PA. In turn, these short capped RNAs are used as primers by PB1 for transcription of viral mRNAs. During virus replication, PB1 initiates RNA synthesis and copy vRNA into complementary RNA (cRNA) which in turn serves as a template for the production of more vRNAs.</text>
</comment>
<comment type="catalytic activity">
    <reaction evidence="1">
        <text>RNA(n) + a ribonucleoside 5'-triphosphate = RNA(n+1) + diphosphate</text>
        <dbReference type="Rhea" id="RHEA:21248"/>
        <dbReference type="Rhea" id="RHEA-COMP:14527"/>
        <dbReference type="Rhea" id="RHEA-COMP:17342"/>
        <dbReference type="ChEBI" id="CHEBI:33019"/>
        <dbReference type="ChEBI" id="CHEBI:61557"/>
        <dbReference type="ChEBI" id="CHEBI:140395"/>
        <dbReference type="EC" id="2.7.7.48"/>
    </reaction>
</comment>
<comment type="subunit">
    <text evidence="1">Influenza RNA polymerase is composed of three subunits: PB1, PB2 and PA. Interacts (via N-terminus) with PA (via C-terminus). Interacts (via C-terminus) with PB2 (via N-terminus); this interaction is essential for transcription initiation.</text>
</comment>
<comment type="subcellular location">
    <subcellularLocation>
        <location evidence="1">Host nucleus</location>
    </subcellularLocation>
    <subcellularLocation>
        <location evidence="1">Host cytoplasm</location>
    </subcellularLocation>
</comment>
<comment type="PTM">
    <text evidence="1">Phosphorylated by host PRKCA.</text>
</comment>
<comment type="similarity">
    <text evidence="1">Belongs to the influenza viruses polymerase PB1 family.</text>
</comment>
<evidence type="ECO:0000255" key="1">
    <source>
        <dbReference type="HAMAP-Rule" id="MF_04065"/>
    </source>
</evidence>
<evidence type="ECO:0000256" key="2">
    <source>
        <dbReference type="SAM" id="MobiDB-lite"/>
    </source>
</evidence>
<name>RDRP_I73A4</name>
<keyword id="KW-1262">Eukaryotic host gene expression shutoff by virus</keyword>
<keyword id="KW-1191">Eukaryotic host transcription shutoff by virus</keyword>
<keyword id="KW-1035">Host cytoplasm</keyword>
<keyword id="KW-1190">Host gene expression shutoff by virus</keyword>
<keyword id="KW-1048">Host nucleus</keyword>
<keyword id="KW-0945">Host-virus interaction</keyword>
<keyword id="KW-1104">Inhibition of host RNA polymerase II by virus</keyword>
<keyword id="KW-0547">Nucleotide-binding</keyword>
<keyword id="KW-0548">Nucleotidyltransferase</keyword>
<keyword id="KW-0597">Phosphoprotein</keyword>
<keyword id="KW-0696">RNA-directed RNA polymerase</keyword>
<keyword id="KW-0808">Transferase</keyword>
<keyword id="KW-0693">Viral RNA replication</keyword>
<keyword id="KW-1195">Viral transcription</keyword>
<organism>
    <name type="scientific">Influenza A virus (strain A/Equine/London/1416/1973 H7N7)</name>
    <dbReference type="NCBI Taxonomy" id="380340"/>
    <lineage>
        <taxon>Viruses</taxon>
        <taxon>Riboviria</taxon>
        <taxon>Orthornavirae</taxon>
        <taxon>Negarnaviricota</taxon>
        <taxon>Polyploviricotina</taxon>
        <taxon>Insthoviricetes</taxon>
        <taxon>Articulavirales</taxon>
        <taxon>Orthomyxoviridae</taxon>
        <taxon>Alphainfluenzavirus</taxon>
        <taxon>Alphainfluenzavirus influenzae</taxon>
        <taxon>Influenza A virus</taxon>
    </lineage>
</organism>
<protein>
    <recommendedName>
        <fullName evidence="1">RNA-directed RNA polymerase catalytic subunit</fullName>
        <ecNumber evidence="1">2.7.7.48</ecNumber>
    </recommendedName>
    <alternativeName>
        <fullName evidence="1">Polymerase basic protein 1</fullName>
        <shortName evidence="1">PB1</shortName>
    </alternativeName>
    <alternativeName>
        <fullName evidence="1">RNA-directed RNA polymerase subunit P1</fullName>
    </alternativeName>
</protein>
<proteinExistence type="inferred from homology"/>
<dbReference type="EC" id="2.7.7.48" evidence="1"/>
<dbReference type="EMBL" id="M25928">
    <property type="protein sequence ID" value="AAA43637.1"/>
    <property type="molecule type" value="Genomic_RNA"/>
</dbReference>
<dbReference type="SMR" id="P16504"/>
<dbReference type="GO" id="GO:0030430">
    <property type="term" value="C:host cell cytoplasm"/>
    <property type="evidence" value="ECO:0007669"/>
    <property type="project" value="UniProtKB-SubCell"/>
</dbReference>
<dbReference type="GO" id="GO:0042025">
    <property type="term" value="C:host cell nucleus"/>
    <property type="evidence" value="ECO:0007669"/>
    <property type="project" value="UniProtKB-SubCell"/>
</dbReference>
<dbReference type="GO" id="GO:0000166">
    <property type="term" value="F:nucleotide binding"/>
    <property type="evidence" value="ECO:0007669"/>
    <property type="project" value="UniProtKB-UniRule"/>
</dbReference>
<dbReference type="GO" id="GO:0003723">
    <property type="term" value="F:RNA binding"/>
    <property type="evidence" value="ECO:0007669"/>
    <property type="project" value="InterPro"/>
</dbReference>
<dbReference type="GO" id="GO:0003968">
    <property type="term" value="F:RNA-directed RNA polymerase activity"/>
    <property type="evidence" value="ECO:0007669"/>
    <property type="project" value="UniProtKB-UniRule"/>
</dbReference>
<dbReference type="GO" id="GO:0006351">
    <property type="term" value="P:DNA-templated transcription"/>
    <property type="evidence" value="ECO:0007669"/>
    <property type="project" value="UniProtKB-UniRule"/>
</dbReference>
<dbReference type="GO" id="GO:0039657">
    <property type="term" value="P:symbiont-mediated suppression of host gene expression"/>
    <property type="evidence" value="ECO:0007669"/>
    <property type="project" value="UniProtKB-KW"/>
</dbReference>
<dbReference type="GO" id="GO:0039523">
    <property type="term" value="P:symbiont-mediated suppression of host mRNA transcription via inhibition of RNA polymerase II activity"/>
    <property type="evidence" value="ECO:0007669"/>
    <property type="project" value="UniProtKB-UniRule"/>
</dbReference>
<dbReference type="GO" id="GO:0039694">
    <property type="term" value="P:viral RNA genome replication"/>
    <property type="evidence" value="ECO:0007669"/>
    <property type="project" value="UniProtKB-UniRule"/>
</dbReference>
<dbReference type="GO" id="GO:0019083">
    <property type="term" value="P:viral transcription"/>
    <property type="evidence" value="ECO:0007669"/>
    <property type="project" value="UniProtKB-KW"/>
</dbReference>
<dbReference type="Gene3D" id="6.10.140.720">
    <property type="match status" value="1"/>
</dbReference>
<dbReference type="HAMAP" id="MF_04065">
    <property type="entry name" value="INFV_RDRP"/>
    <property type="match status" value="1"/>
</dbReference>
<dbReference type="InterPro" id="IPR007099">
    <property type="entry name" value="RNA-dir_pol_NSvirus"/>
</dbReference>
<dbReference type="InterPro" id="IPR001407">
    <property type="entry name" value="RNA_pol_PB1_influenza"/>
</dbReference>
<dbReference type="Pfam" id="PF00602">
    <property type="entry name" value="Flu_PB1"/>
    <property type="match status" value="1"/>
</dbReference>
<dbReference type="PIRSF" id="PIRSF000827">
    <property type="entry name" value="RdRPol_OMV"/>
    <property type="match status" value="1"/>
</dbReference>
<dbReference type="PROSITE" id="PS50525">
    <property type="entry name" value="RDRP_SSRNA_NEG_SEG"/>
    <property type="match status" value="1"/>
</dbReference>
<reference key="1">
    <citation type="journal article" date="1989" name="J. Virol.">
        <title>Avian-to-human transmission of the PB1 gene of influenza A viruses in the 1957 and 1968 pandemics.</title>
        <authorList>
            <person name="Kawaoka Y."/>
            <person name="Krauss S."/>
            <person name="Webster R.G."/>
        </authorList>
    </citation>
    <scope>NUCLEOTIDE SEQUENCE [GENOMIC RNA]</scope>
</reference>
<gene>
    <name evidence="1" type="primary">PB1</name>
</gene>
<feature type="chain" id="PRO_0000078751" description="RNA-directed RNA polymerase catalytic subunit">
    <location>
        <begin position="1"/>
        <end position="757"/>
    </location>
</feature>
<feature type="domain" description="RdRp catalytic" evidence="1">
    <location>
        <begin position="286"/>
        <end position="483"/>
    </location>
</feature>
<feature type="region of interest" description="Disordered" evidence="2">
    <location>
        <begin position="55"/>
        <end position="82"/>
    </location>
</feature>
<feature type="region of interest" description="Promoter-binding site" evidence="1">
    <location>
        <begin position="249"/>
        <end position="256"/>
    </location>
</feature>
<feature type="short sequence motif" description="Nuclear localization signal" evidence="1">
    <location>
        <begin position="187"/>
        <end position="195"/>
    </location>
</feature>
<feature type="short sequence motif" description="Nuclear localization signal" evidence="1">
    <location>
        <begin position="203"/>
        <end position="216"/>
    </location>
</feature>
<organismHost>
    <name type="scientific">Aves</name>
    <dbReference type="NCBI Taxonomy" id="8782"/>
</organismHost>
<organismHost>
    <name type="scientific">Equus caballus</name>
    <name type="common">Horse</name>
    <dbReference type="NCBI Taxonomy" id="9796"/>
</organismHost>
<organismHost>
    <name type="scientific">Homo sapiens</name>
    <name type="common">Human</name>
    <dbReference type="NCBI Taxonomy" id="9606"/>
</organismHost>
<organismHost>
    <name type="scientific">Phocidae</name>
    <name type="common">true seals</name>
    <dbReference type="NCBI Taxonomy" id="9709"/>
</organismHost>